<comment type="function">
    <text evidence="1">Component of the A-type ATP synthase that produces ATP from ADP in the presence of a proton gradient across the membrane.</text>
</comment>
<comment type="subunit">
    <text evidence="1">Has multiple subunits with at least A(3), B(3), C, D, E, F, H, I and proteolipid K(x).</text>
</comment>
<comment type="subcellular location">
    <subcellularLocation>
        <location evidence="1">Cell membrane</location>
        <topology evidence="1">Peripheral membrane protein</topology>
    </subcellularLocation>
</comment>
<comment type="similarity">
    <text evidence="1">Belongs to the V-ATPase E subunit family.</text>
</comment>
<name>AATE1_METHJ</name>
<sequence length="191" mass="21405">MGLDAVIAEIKEKGRHEAETIVNEGSARKDEIMNAAKQEVEKIHLTVRDEVEKNLSHIISQEEAAAHLIVKRQVLNAQKDLMDQVYKQALDKIVSMPESFHEEAITSLLRKAKEEIPKGRVSCAARDEKILKNVLKQSEFSAYTFGSVIDTDGGIIVESDDGQLQVDYSYRTFLNQVWESGLKDASDSLFA</sequence>
<keyword id="KW-0066">ATP synthesis</keyword>
<keyword id="KW-1003">Cell membrane</keyword>
<keyword id="KW-0375">Hydrogen ion transport</keyword>
<keyword id="KW-0406">Ion transport</keyword>
<keyword id="KW-0472">Membrane</keyword>
<keyword id="KW-1185">Reference proteome</keyword>
<keyword id="KW-0813">Transport</keyword>
<protein>
    <recommendedName>
        <fullName evidence="1">A-type ATP synthase subunit E 1</fullName>
    </recommendedName>
</protein>
<reference key="1">
    <citation type="journal article" date="2016" name="Stand. Genomic Sci.">
        <title>Complete genome sequence of Methanospirillum hungatei type strain JF1.</title>
        <authorList>
            <person name="Gunsalus R.P."/>
            <person name="Cook L.E."/>
            <person name="Crable B."/>
            <person name="Rohlin L."/>
            <person name="McDonald E."/>
            <person name="Mouttaki H."/>
            <person name="Sieber J.R."/>
            <person name="Poweleit N."/>
            <person name="Zhou H."/>
            <person name="Lapidus A.L."/>
            <person name="Daligault H.E."/>
            <person name="Land M."/>
            <person name="Gilna P."/>
            <person name="Ivanova N."/>
            <person name="Kyrpides N."/>
            <person name="Culley D.E."/>
            <person name="McInerney M.J."/>
        </authorList>
    </citation>
    <scope>NUCLEOTIDE SEQUENCE [LARGE SCALE GENOMIC DNA]</scope>
    <source>
        <strain>ATCC 27890 / DSM 864 / NBRC 100397 / JF-1</strain>
    </source>
</reference>
<accession>Q2FNK3</accession>
<organism>
    <name type="scientific">Methanospirillum hungatei JF-1 (strain ATCC 27890 / DSM 864 / NBRC 100397 / JF-1)</name>
    <dbReference type="NCBI Taxonomy" id="323259"/>
    <lineage>
        <taxon>Archaea</taxon>
        <taxon>Methanobacteriati</taxon>
        <taxon>Methanobacteriota</taxon>
        <taxon>Stenosarchaea group</taxon>
        <taxon>Methanomicrobia</taxon>
        <taxon>Methanomicrobiales</taxon>
        <taxon>Methanospirillaceae</taxon>
        <taxon>Methanospirillum</taxon>
    </lineage>
</organism>
<dbReference type="EMBL" id="CP000254">
    <property type="protein sequence ID" value="ABD40928.1"/>
    <property type="molecule type" value="Genomic_DNA"/>
</dbReference>
<dbReference type="RefSeq" id="WP_011448205.1">
    <property type="nucleotide sequence ID" value="NC_007796.1"/>
</dbReference>
<dbReference type="SMR" id="Q2FNK3"/>
<dbReference type="STRING" id="323259.Mhun_1180"/>
<dbReference type="EnsemblBacteria" id="ABD40928">
    <property type="protein sequence ID" value="ABD40928"/>
    <property type="gene ID" value="Mhun_1180"/>
</dbReference>
<dbReference type="GeneID" id="3923382"/>
<dbReference type="KEGG" id="mhu:Mhun_1180"/>
<dbReference type="eggNOG" id="arCOG00869">
    <property type="taxonomic scope" value="Archaea"/>
</dbReference>
<dbReference type="HOGENOM" id="CLU_120786_0_0_2"/>
<dbReference type="InParanoid" id="Q2FNK3"/>
<dbReference type="OrthoDB" id="4691at2157"/>
<dbReference type="Proteomes" id="UP000001941">
    <property type="component" value="Chromosome"/>
</dbReference>
<dbReference type="GO" id="GO:0005886">
    <property type="term" value="C:plasma membrane"/>
    <property type="evidence" value="ECO:0007669"/>
    <property type="project" value="UniProtKB-SubCell"/>
</dbReference>
<dbReference type="GO" id="GO:0033178">
    <property type="term" value="C:proton-transporting two-sector ATPase complex, catalytic domain"/>
    <property type="evidence" value="ECO:0007669"/>
    <property type="project" value="InterPro"/>
</dbReference>
<dbReference type="GO" id="GO:0005524">
    <property type="term" value="F:ATP binding"/>
    <property type="evidence" value="ECO:0007669"/>
    <property type="project" value="UniProtKB-UniRule"/>
</dbReference>
<dbReference type="GO" id="GO:0046933">
    <property type="term" value="F:proton-transporting ATP synthase activity, rotational mechanism"/>
    <property type="evidence" value="ECO:0007669"/>
    <property type="project" value="UniProtKB-UniRule"/>
</dbReference>
<dbReference type="GO" id="GO:0046961">
    <property type="term" value="F:proton-transporting ATPase activity, rotational mechanism"/>
    <property type="evidence" value="ECO:0007669"/>
    <property type="project" value="InterPro"/>
</dbReference>
<dbReference type="GO" id="GO:0042777">
    <property type="term" value="P:proton motive force-driven plasma membrane ATP synthesis"/>
    <property type="evidence" value="ECO:0007669"/>
    <property type="project" value="UniProtKB-UniRule"/>
</dbReference>
<dbReference type="Gene3D" id="3.30.2320.30">
    <property type="entry name" value="ATP synthase, E subunit, C-terminal"/>
    <property type="match status" value="1"/>
</dbReference>
<dbReference type="Gene3D" id="1.20.5.620">
    <property type="entry name" value="F1F0 ATP synthase subunit B, membrane domain"/>
    <property type="match status" value="1"/>
</dbReference>
<dbReference type="HAMAP" id="MF_00311">
    <property type="entry name" value="ATP_synth_E_arch"/>
    <property type="match status" value="1"/>
</dbReference>
<dbReference type="InterPro" id="IPR038495">
    <property type="entry name" value="ATPase_E_C"/>
</dbReference>
<dbReference type="InterPro" id="IPR002842">
    <property type="entry name" value="ATPase_V1_Esu"/>
</dbReference>
<dbReference type="Pfam" id="PF01991">
    <property type="entry name" value="vATP-synt_E"/>
    <property type="match status" value="1"/>
</dbReference>
<dbReference type="SUPFAM" id="SSF160527">
    <property type="entry name" value="V-type ATPase subunit E-like"/>
    <property type="match status" value="1"/>
</dbReference>
<proteinExistence type="inferred from homology"/>
<evidence type="ECO:0000255" key="1">
    <source>
        <dbReference type="HAMAP-Rule" id="MF_00311"/>
    </source>
</evidence>
<feature type="chain" id="PRO_0000322532" description="A-type ATP synthase subunit E 1">
    <location>
        <begin position="1"/>
        <end position="191"/>
    </location>
</feature>
<gene>
    <name evidence="1" type="primary">atpE1</name>
    <name type="ordered locus">Mhun_1180</name>
</gene>